<gene>
    <name evidence="1" type="primary">hcaB</name>
    <name type="ordered locus">Z3813</name>
    <name type="ordered locus">ECs3407</name>
</gene>
<sequence length="270" mass="28440">MSDLHNESIFITGGGSGLGLALVERFIEEGAQVATLELSAAKVASLRQRFGEHILAVEGNVTCYADYQRAVDQILTRSGKLDCFIGNAGIWDHNASLVNTPAETLETGFHELFNVNVLGYLLGAKACAPALIAGEGSMIFTLSNAAWYPGGGGPLYTASKHAATGLIRQLAYELAPKVRVNGVGPCGMASDLRGPQALGQSETSIMQSLTPEKIAAILPLQFFPQPADFTGPYVMLASRRNNRALSGVMINADAGLAIRGIRHVAAGLDL</sequence>
<reference key="1">
    <citation type="journal article" date="2001" name="Nature">
        <title>Genome sequence of enterohaemorrhagic Escherichia coli O157:H7.</title>
        <authorList>
            <person name="Perna N.T."/>
            <person name="Plunkett G. III"/>
            <person name="Burland V."/>
            <person name="Mau B."/>
            <person name="Glasner J.D."/>
            <person name="Rose D.J."/>
            <person name="Mayhew G.F."/>
            <person name="Evans P.S."/>
            <person name="Gregor J."/>
            <person name="Kirkpatrick H.A."/>
            <person name="Posfai G."/>
            <person name="Hackett J."/>
            <person name="Klink S."/>
            <person name="Boutin A."/>
            <person name="Shao Y."/>
            <person name="Miller L."/>
            <person name="Grotbeck E.J."/>
            <person name="Davis N.W."/>
            <person name="Lim A."/>
            <person name="Dimalanta E.T."/>
            <person name="Potamousis K."/>
            <person name="Apodaca J."/>
            <person name="Anantharaman T.S."/>
            <person name="Lin J."/>
            <person name="Yen G."/>
            <person name="Schwartz D.C."/>
            <person name="Welch R.A."/>
            <person name="Blattner F.R."/>
        </authorList>
    </citation>
    <scope>NUCLEOTIDE SEQUENCE [LARGE SCALE GENOMIC DNA]</scope>
    <source>
        <strain>O157:H7 / EDL933 / ATCC 700927 / EHEC</strain>
    </source>
</reference>
<reference key="2">
    <citation type="journal article" date="2001" name="DNA Res.">
        <title>Complete genome sequence of enterohemorrhagic Escherichia coli O157:H7 and genomic comparison with a laboratory strain K-12.</title>
        <authorList>
            <person name="Hayashi T."/>
            <person name="Makino K."/>
            <person name="Ohnishi M."/>
            <person name="Kurokawa K."/>
            <person name="Ishii K."/>
            <person name="Yokoyama K."/>
            <person name="Han C.-G."/>
            <person name="Ohtsubo E."/>
            <person name="Nakayama K."/>
            <person name="Murata T."/>
            <person name="Tanaka M."/>
            <person name="Tobe T."/>
            <person name="Iida T."/>
            <person name="Takami H."/>
            <person name="Honda T."/>
            <person name="Sasakawa C."/>
            <person name="Ogasawara N."/>
            <person name="Yasunaga T."/>
            <person name="Kuhara S."/>
            <person name="Shiba T."/>
            <person name="Hattori M."/>
            <person name="Shinagawa H."/>
        </authorList>
    </citation>
    <scope>NUCLEOTIDE SEQUENCE [LARGE SCALE GENOMIC DNA]</scope>
    <source>
        <strain>O157:H7 / Sakai / RIMD 0509952 / EHEC</strain>
    </source>
</reference>
<name>HCAB_ECO57</name>
<organism>
    <name type="scientific">Escherichia coli O157:H7</name>
    <dbReference type="NCBI Taxonomy" id="83334"/>
    <lineage>
        <taxon>Bacteria</taxon>
        <taxon>Pseudomonadati</taxon>
        <taxon>Pseudomonadota</taxon>
        <taxon>Gammaproteobacteria</taxon>
        <taxon>Enterobacterales</taxon>
        <taxon>Enterobacteriaceae</taxon>
        <taxon>Escherichia</taxon>
    </lineage>
</organism>
<comment type="function">
    <text evidence="1">Converts 3-phenylpropionate-dihydrodiol (PP-dihydrodiol) and cinnamic acid-dihydrodiol (CI-dihydrodiol) into 3-(2,3-dihydroxylphenyl)propanoic acid (DHPP) and 2,3-dihydroxicinnamic acid (DHCI), respectively.</text>
</comment>
<comment type="catalytic activity">
    <reaction evidence="1">
        <text>3-(cis-5,6-dihydroxycyclohexa-1,3-dien-1-yl)propanoate + NAD(+) = 3-(2,3-dihydroxyphenyl)propanoate + NADH + H(+)</text>
        <dbReference type="Rhea" id="RHEA:25062"/>
        <dbReference type="ChEBI" id="CHEBI:15378"/>
        <dbReference type="ChEBI" id="CHEBI:46951"/>
        <dbReference type="ChEBI" id="CHEBI:57540"/>
        <dbReference type="ChEBI" id="CHEBI:57945"/>
        <dbReference type="ChEBI" id="CHEBI:60087"/>
        <dbReference type="EC" id="1.3.1.87"/>
    </reaction>
</comment>
<comment type="catalytic activity">
    <reaction evidence="1">
        <text>(2E)-3-(cis-5,6-dihydroxycyclohexa-1,3-dien-1-yl)prop-2-enoate + NAD(+) = (2E)-3-(2,3-dihydroxyphenyl)prop-2-enoate + NADH + H(+)</text>
        <dbReference type="Rhea" id="RHEA:25066"/>
        <dbReference type="ChEBI" id="CHEBI:15378"/>
        <dbReference type="ChEBI" id="CHEBI:57540"/>
        <dbReference type="ChEBI" id="CHEBI:57945"/>
        <dbReference type="ChEBI" id="CHEBI:58642"/>
        <dbReference type="ChEBI" id="CHEBI:61451"/>
        <dbReference type="EC" id="1.3.1.87"/>
    </reaction>
</comment>
<comment type="pathway">
    <text evidence="1">Aromatic compound metabolism; 3-phenylpropanoate degradation.</text>
</comment>
<comment type="similarity">
    <text evidence="1">Belongs to the short-chain dehydrogenases/reductases (SDR) family.</text>
</comment>
<protein>
    <recommendedName>
        <fullName evidence="1">3-phenylpropionate-dihydrodiol/cinnamic acid-dihydrodiol dehydrogenase</fullName>
        <ecNumber evidence="1">1.3.1.87</ecNumber>
    </recommendedName>
    <alternativeName>
        <fullName evidence="1">2,3-dihydroxy-2,3-dihydrophenylpropionate dehydrogenase</fullName>
    </alternativeName>
    <alternativeName>
        <fullName evidence="1">3-(cis-5,6-dihydroxycyclohexa-1,3-dien-1-yl)propanoate dehydrogenase</fullName>
    </alternativeName>
    <alternativeName>
        <fullName evidence="1">CI-dihydrodiol dehydrogenase</fullName>
    </alternativeName>
    <alternativeName>
        <fullName evidence="1">Cis-3-(2-carboxyethenyl)-3,5-cyclohexadiene-1,2-diol dehydrogenase</fullName>
    </alternativeName>
    <alternativeName>
        <fullName evidence="1">Cis-3-(2-carboxyethyl)-3,5-cyclohexadiene-1,2-diol dehydrogenase</fullName>
    </alternativeName>
    <alternativeName>
        <fullName evidence="1">PP-dihydrodiol dehydrogenase</fullName>
    </alternativeName>
</protein>
<accession>Q8XA72</accession>
<accession>Q7ABL6</accession>
<evidence type="ECO:0000255" key="1">
    <source>
        <dbReference type="HAMAP-Rule" id="MF_01647"/>
    </source>
</evidence>
<proteinExistence type="inferred from homology"/>
<dbReference type="EC" id="1.3.1.87" evidence="1"/>
<dbReference type="EMBL" id="AE005174">
    <property type="protein sequence ID" value="AAG57654.1"/>
    <property type="molecule type" value="Genomic_DNA"/>
</dbReference>
<dbReference type="EMBL" id="BA000007">
    <property type="protein sequence ID" value="BAB36830.1"/>
    <property type="molecule type" value="Genomic_DNA"/>
</dbReference>
<dbReference type="PIR" id="B85899">
    <property type="entry name" value="B85899"/>
</dbReference>
<dbReference type="PIR" id="G91054">
    <property type="entry name" value="G91054"/>
</dbReference>
<dbReference type="RefSeq" id="NP_311434.1">
    <property type="nucleotide sequence ID" value="NC_002695.1"/>
</dbReference>
<dbReference type="RefSeq" id="WP_001281372.1">
    <property type="nucleotide sequence ID" value="NZ_VOAI01000001.1"/>
</dbReference>
<dbReference type="SMR" id="Q8XA72"/>
<dbReference type="STRING" id="155864.Z3813"/>
<dbReference type="GeneID" id="75172654"/>
<dbReference type="GeneID" id="914919"/>
<dbReference type="KEGG" id="ece:Z3813"/>
<dbReference type="KEGG" id="ecs:ECs_3407"/>
<dbReference type="PATRIC" id="fig|386585.9.peg.3559"/>
<dbReference type="eggNOG" id="COG1028">
    <property type="taxonomic scope" value="Bacteria"/>
</dbReference>
<dbReference type="HOGENOM" id="CLU_010194_1_0_6"/>
<dbReference type="OMA" id="VFHINVK"/>
<dbReference type="UniPathway" id="UPA00714"/>
<dbReference type="Proteomes" id="UP000000558">
    <property type="component" value="Chromosome"/>
</dbReference>
<dbReference type="Proteomes" id="UP000002519">
    <property type="component" value="Chromosome"/>
</dbReference>
<dbReference type="GO" id="GO:0018498">
    <property type="term" value="F:2,3-dihydroxy-2,3-dihydro-phenylpropionate dehydrogenase activity"/>
    <property type="evidence" value="ECO:0007669"/>
    <property type="project" value="UniProtKB-UniRule"/>
</dbReference>
<dbReference type="GO" id="GO:0019380">
    <property type="term" value="P:3-phenylpropionate catabolic process"/>
    <property type="evidence" value="ECO:0007669"/>
    <property type="project" value="UniProtKB-UniRule"/>
</dbReference>
<dbReference type="CDD" id="cd05348">
    <property type="entry name" value="BphB-like_SDR_c"/>
    <property type="match status" value="1"/>
</dbReference>
<dbReference type="FunFam" id="3.40.50.720:FF:000151">
    <property type="entry name" value="3-phenylpropionate-dihydrodiol/cinnamic acid-dihydrodiol dehydrogenase"/>
    <property type="match status" value="1"/>
</dbReference>
<dbReference type="Gene3D" id="3.40.50.720">
    <property type="entry name" value="NAD(P)-binding Rossmann-like Domain"/>
    <property type="match status" value="1"/>
</dbReference>
<dbReference type="HAMAP" id="MF_01647">
    <property type="entry name" value="HcaB"/>
    <property type="match status" value="1"/>
</dbReference>
<dbReference type="InterPro" id="IPR047950">
    <property type="entry name" value="BphB-like_SDR"/>
</dbReference>
<dbReference type="InterPro" id="IPR023643">
    <property type="entry name" value="Dihydrodiol_DH_HcaB"/>
</dbReference>
<dbReference type="InterPro" id="IPR036291">
    <property type="entry name" value="NAD(P)-bd_dom_sf"/>
</dbReference>
<dbReference type="InterPro" id="IPR020904">
    <property type="entry name" value="Sc_DH/Rdtase_CS"/>
</dbReference>
<dbReference type="InterPro" id="IPR002347">
    <property type="entry name" value="SDR_fam"/>
</dbReference>
<dbReference type="NCBIfam" id="NF042950">
    <property type="entry name" value="3PPDhyd_Dh_HcaB"/>
    <property type="match status" value="1"/>
</dbReference>
<dbReference type="NCBIfam" id="NF004849">
    <property type="entry name" value="PRK06200.1"/>
    <property type="match status" value="1"/>
</dbReference>
<dbReference type="PANTHER" id="PTHR43943:SF17">
    <property type="entry name" value="3-PHENYLPROPIONATE-DIHYDRODIOL_CINNAMIC ACID-DIHYDRODIOL DEHYDROGENASE"/>
    <property type="match status" value="1"/>
</dbReference>
<dbReference type="PANTHER" id="PTHR43943">
    <property type="entry name" value="DEHYDROGENASE/REDUCTASE (SDR FAMILY) MEMBER 4"/>
    <property type="match status" value="1"/>
</dbReference>
<dbReference type="Pfam" id="PF00106">
    <property type="entry name" value="adh_short"/>
    <property type="match status" value="1"/>
</dbReference>
<dbReference type="PRINTS" id="PR00081">
    <property type="entry name" value="GDHRDH"/>
</dbReference>
<dbReference type="PRINTS" id="PR00080">
    <property type="entry name" value="SDRFAMILY"/>
</dbReference>
<dbReference type="SUPFAM" id="SSF51735">
    <property type="entry name" value="NAD(P)-binding Rossmann-fold domains"/>
    <property type="match status" value="1"/>
</dbReference>
<dbReference type="PROSITE" id="PS00061">
    <property type="entry name" value="ADH_SHORT"/>
    <property type="match status" value="1"/>
</dbReference>
<keyword id="KW-0058">Aromatic hydrocarbons catabolism</keyword>
<keyword id="KW-0520">NAD</keyword>
<keyword id="KW-0560">Oxidoreductase</keyword>
<keyword id="KW-1185">Reference proteome</keyword>
<feature type="chain" id="PRO_0000333761" description="3-phenylpropionate-dihydrodiol/cinnamic acid-dihydrodiol dehydrogenase">
    <location>
        <begin position="1"/>
        <end position="270"/>
    </location>
</feature>
<feature type="active site" description="Proton acceptor" evidence="1">
    <location>
        <position position="156"/>
    </location>
</feature>
<feature type="binding site" evidence="1">
    <location>
        <begin position="10"/>
        <end position="34"/>
    </location>
    <ligand>
        <name>NAD(+)</name>
        <dbReference type="ChEBI" id="CHEBI:57540"/>
    </ligand>
</feature>
<feature type="binding site" evidence="1">
    <location>
        <position position="143"/>
    </location>
    <ligand>
        <name>substrate</name>
    </ligand>
</feature>